<gene>
    <name type="ordered locus">A1G_03985</name>
</gene>
<dbReference type="EMBL" id="AF042063">
    <property type="protein sequence ID" value="AAC05203.1"/>
    <property type="molecule type" value="Genomic_DNA"/>
</dbReference>
<dbReference type="EMBL" id="CP000848">
    <property type="protein sequence ID" value="ABV76311.1"/>
    <property type="molecule type" value="Genomic_DNA"/>
</dbReference>
<dbReference type="RefSeq" id="WP_012150888.1">
    <property type="nucleotide sequence ID" value="NZ_CP121767.1"/>
</dbReference>
<dbReference type="SMR" id="O68452"/>
<dbReference type="GeneID" id="79937432"/>
<dbReference type="KEGG" id="rri:A1G_03985"/>
<dbReference type="HOGENOM" id="CLU_061989_0_0_5"/>
<dbReference type="Proteomes" id="UP000006832">
    <property type="component" value="Chromosome"/>
</dbReference>
<dbReference type="GO" id="GO:0005829">
    <property type="term" value="C:cytosol"/>
    <property type="evidence" value="ECO:0007669"/>
    <property type="project" value="TreeGrafter"/>
</dbReference>
<dbReference type="GO" id="GO:0033194">
    <property type="term" value="P:response to hydroperoxide"/>
    <property type="evidence" value="ECO:0007669"/>
    <property type="project" value="TreeGrafter"/>
</dbReference>
<dbReference type="HAMAP" id="MF_00652">
    <property type="entry name" value="UPF0246"/>
    <property type="match status" value="1"/>
</dbReference>
<dbReference type="InterPro" id="IPR005583">
    <property type="entry name" value="YaaA"/>
</dbReference>
<dbReference type="PANTHER" id="PTHR30283:SF4">
    <property type="entry name" value="PEROXIDE STRESS RESISTANCE PROTEIN YAAA"/>
    <property type="match status" value="1"/>
</dbReference>
<dbReference type="PANTHER" id="PTHR30283">
    <property type="entry name" value="PEROXIDE STRESS RESPONSE PROTEIN YAAA"/>
    <property type="match status" value="1"/>
</dbReference>
<dbReference type="Pfam" id="PF03883">
    <property type="entry name" value="H2O2_YaaD"/>
    <property type="match status" value="1"/>
</dbReference>
<comment type="similarity">
    <text evidence="1">Belongs to the UPF0246 family.</text>
</comment>
<protein>
    <recommendedName>
        <fullName evidence="1">UPF0246 protein A1G_03985</fullName>
    </recommendedName>
</protein>
<accession>O68452</accession>
<accession>A8GSD6</accession>
<name>Y3985_RICRS</name>
<proteinExistence type="inferred from homology"/>
<reference key="1">
    <citation type="submission" date="1998-01" db="EMBL/GenBank/DDBJ databases">
        <title>Rickettsia rickettsii fragment which imparts hemolysis upon E. coli.</title>
        <authorList>
            <person name="Temenak J.J."/>
        </authorList>
    </citation>
    <scope>NUCLEOTIDE SEQUENCE [GENOMIC DNA]</scope>
</reference>
<reference key="2">
    <citation type="submission" date="2007-09" db="EMBL/GenBank/DDBJ databases">
        <title>Complete genome sequence of Rickettsia rickettsii.</title>
        <authorList>
            <person name="Madan A."/>
            <person name="Fahey J."/>
            <person name="Helton E."/>
            <person name="Ketteman M."/>
            <person name="Madan A."/>
            <person name="Rodrigues S."/>
            <person name="Sanchez A."/>
            <person name="Dasch G."/>
            <person name="Eremeeva M."/>
        </authorList>
    </citation>
    <scope>NUCLEOTIDE SEQUENCE [LARGE SCALE GENOMIC DNA]</scope>
    <source>
        <strain>Sheila Smith</strain>
    </source>
</reference>
<sequence length="248" mass="28143">MLAIISSAKTLNFEKLAPKTELTIPVFLTLTNKLLATLQSYSENQLSKIMNISAKLAHINKERFKDFDNQESKAAIFAYAGDVFNNIHIEKLTNHALNFLQSHLLIISGLYGVLKPLDTIKPYRLEMATKLNEINLTNFWQDEVTNYINKILAKQENKYLLNLASQEYSSVINPNKLKYQLVNVHFKENRNGKLSTIGINAKKARGAMVKVIANNLIDSPELLKNFSYLGYAFSTKHSSDNELVFIKS</sequence>
<organism>
    <name type="scientific">Rickettsia rickettsii (strain Sheila Smith)</name>
    <dbReference type="NCBI Taxonomy" id="392021"/>
    <lineage>
        <taxon>Bacteria</taxon>
        <taxon>Pseudomonadati</taxon>
        <taxon>Pseudomonadota</taxon>
        <taxon>Alphaproteobacteria</taxon>
        <taxon>Rickettsiales</taxon>
        <taxon>Rickettsiaceae</taxon>
        <taxon>Rickettsieae</taxon>
        <taxon>Rickettsia</taxon>
        <taxon>spotted fever group</taxon>
    </lineage>
</organism>
<evidence type="ECO:0000255" key="1">
    <source>
        <dbReference type="HAMAP-Rule" id="MF_00652"/>
    </source>
</evidence>
<feature type="chain" id="PRO_0000204000" description="UPF0246 protein A1G_03985">
    <location>
        <begin position="1"/>
        <end position="248"/>
    </location>
</feature>